<feature type="chain" id="PRO_0000241280" description="Aspartyl/glutamyl-tRNA(Asn/Gln) amidotransferase subunit B">
    <location>
        <begin position="1"/>
        <end position="480"/>
    </location>
</feature>
<keyword id="KW-0067">ATP-binding</keyword>
<keyword id="KW-0436">Ligase</keyword>
<keyword id="KW-0547">Nucleotide-binding</keyword>
<keyword id="KW-0648">Protein biosynthesis</keyword>
<comment type="function">
    <text evidence="1">Allows the formation of correctly charged Asn-tRNA(Asn) or Gln-tRNA(Gln) through the transamidation of misacylated Asp-tRNA(Asn) or Glu-tRNA(Gln) in organisms which lack either or both of asparaginyl-tRNA or glutaminyl-tRNA synthetases. The reaction takes place in the presence of glutamine and ATP through an activated phospho-Asp-tRNA(Asn) or phospho-Glu-tRNA(Gln).</text>
</comment>
<comment type="catalytic activity">
    <reaction evidence="1">
        <text>L-glutamyl-tRNA(Gln) + L-glutamine + ATP + H2O = L-glutaminyl-tRNA(Gln) + L-glutamate + ADP + phosphate + H(+)</text>
        <dbReference type="Rhea" id="RHEA:17521"/>
        <dbReference type="Rhea" id="RHEA-COMP:9681"/>
        <dbReference type="Rhea" id="RHEA-COMP:9684"/>
        <dbReference type="ChEBI" id="CHEBI:15377"/>
        <dbReference type="ChEBI" id="CHEBI:15378"/>
        <dbReference type="ChEBI" id="CHEBI:29985"/>
        <dbReference type="ChEBI" id="CHEBI:30616"/>
        <dbReference type="ChEBI" id="CHEBI:43474"/>
        <dbReference type="ChEBI" id="CHEBI:58359"/>
        <dbReference type="ChEBI" id="CHEBI:78520"/>
        <dbReference type="ChEBI" id="CHEBI:78521"/>
        <dbReference type="ChEBI" id="CHEBI:456216"/>
    </reaction>
</comment>
<comment type="catalytic activity">
    <reaction evidence="1">
        <text>L-aspartyl-tRNA(Asn) + L-glutamine + ATP + H2O = L-asparaginyl-tRNA(Asn) + L-glutamate + ADP + phosphate + 2 H(+)</text>
        <dbReference type="Rhea" id="RHEA:14513"/>
        <dbReference type="Rhea" id="RHEA-COMP:9674"/>
        <dbReference type="Rhea" id="RHEA-COMP:9677"/>
        <dbReference type="ChEBI" id="CHEBI:15377"/>
        <dbReference type="ChEBI" id="CHEBI:15378"/>
        <dbReference type="ChEBI" id="CHEBI:29985"/>
        <dbReference type="ChEBI" id="CHEBI:30616"/>
        <dbReference type="ChEBI" id="CHEBI:43474"/>
        <dbReference type="ChEBI" id="CHEBI:58359"/>
        <dbReference type="ChEBI" id="CHEBI:78515"/>
        <dbReference type="ChEBI" id="CHEBI:78516"/>
        <dbReference type="ChEBI" id="CHEBI:456216"/>
    </reaction>
</comment>
<comment type="subunit">
    <text evidence="1">Heterotrimer of A, B and C subunits.</text>
</comment>
<comment type="similarity">
    <text evidence="1">Belongs to the GatB/GatE family. GatB subfamily.</text>
</comment>
<proteinExistence type="inferred from homology"/>
<reference key="1">
    <citation type="journal article" date="2005" name="Proc. Natl. Acad. Sci. U.S.A.">
        <title>Genome analysis of multiple pathogenic isolates of Streptococcus agalactiae: implications for the microbial 'pan-genome'.</title>
        <authorList>
            <person name="Tettelin H."/>
            <person name="Masignani V."/>
            <person name="Cieslewicz M.J."/>
            <person name="Donati C."/>
            <person name="Medini D."/>
            <person name="Ward N.L."/>
            <person name="Angiuoli S.V."/>
            <person name="Crabtree J."/>
            <person name="Jones A.L."/>
            <person name="Durkin A.S."/>
            <person name="DeBoy R.T."/>
            <person name="Davidsen T.M."/>
            <person name="Mora M."/>
            <person name="Scarselli M."/>
            <person name="Margarit y Ros I."/>
            <person name="Peterson J.D."/>
            <person name="Hauser C.R."/>
            <person name="Sundaram J.P."/>
            <person name="Nelson W.C."/>
            <person name="Madupu R."/>
            <person name="Brinkac L.M."/>
            <person name="Dodson R.J."/>
            <person name="Rosovitz M.J."/>
            <person name="Sullivan S.A."/>
            <person name="Daugherty S.C."/>
            <person name="Haft D.H."/>
            <person name="Selengut J."/>
            <person name="Gwinn M.L."/>
            <person name="Zhou L."/>
            <person name="Zafar N."/>
            <person name="Khouri H."/>
            <person name="Radune D."/>
            <person name="Dimitrov G."/>
            <person name="Watkins K."/>
            <person name="O'Connor K.J."/>
            <person name="Smith S."/>
            <person name="Utterback T.R."/>
            <person name="White O."/>
            <person name="Rubens C.E."/>
            <person name="Grandi G."/>
            <person name="Madoff L.C."/>
            <person name="Kasper D.L."/>
            <person name="Telford J.L."/>
            <person name="Wessels M.R."/>
            <person name="Rappuoli R."/>
            <person name="Fraser C.M."/>
        </authorList>
    </citation>
    <scope>NUCLEOTIDE SEQUENCE [LARGE SCALE GENOMIC DNA]</scope>
    <source>
        <strain>ATCC 27591 / A909 / CDC SS700</strain>
    </source>
</reference>
<gene>
    <name evidence="1" type="primary">gatB</name>
    <name type="ordered locus">SAK_1679</name>
</gene>
<protein>
    <recommendedName>
        <fullName evidence="1">Aspartyl/glutamyl-tRNA(Asn/Gln) amidotransferase subunit B</fullName>
        <shortName evidence="1">Asp/Glu-ADT subunit B</shortName>
        <ecNumber evidence="1">6.3.5.-</ecNumber>
    </recommendedName>
</protein>
<name>GATB_STRA1</name>
<organism>
    <name type="scientific">Streptococcus agalactiae serotype Ia (strain ATCC 27591 / A909 / CDC SS700)</name>
    <dbReference type="NCBI Taxonomy" id="205921"/>
    <lineage>
        <taxon>Bacteria</taxon>
        <taxon>Bacillati</taxon>
        <taxon>Bacillota</taxon>
        <taxon>Bacilli</taxon>
        <taxon>Lactobacillales</taxon>
        <taxon>Streptococcaceae</taxon>
        <taxon>Streptococcus</taxon>
    </lineage>
</organism>
<dbReference type="EC" id="6.3.5.-" evidence="1"/>
<dbReference type="EMBL" id="CP000114">
    <property type="protein sequence ID" value="ABA46078.1"/>
    <property type="molecule type" value="Genomic_DNA"/>
</dbReference>
<dbReference type="RefSeq" id="WP_001008627.1">
    <property type="nucleotide sequence ID" value="NC_007432.1"/>
</dbReference>
<dbReference type="SMR" id="Q3JZM2"/>
<dbReference type="GeneID" id="66886513"/>
<dbReference type="KEGG" id="sak:SAK_1679"/>
<dbReference type="HOGENOM" id="CLU_019240_0_0_9"/>
<dbReference type="GO" id="GO:0050566">
    <property type="term" value="F:asparaginyl-tRNA synthase (glutamine-hydrolyzing) activity"/>
    <property type="evidence" value="ECO:0007669"/>
    <property type="project" value="RHEA"/>
</dbReference>
<dbReference type="GO" id="GO:0005524">
    <property type="term" value="F:ATP binding"/>
    <property type="evidence" value="ECO:0007669"/>
    <property type="project" value="UniProtKB-KW"/>
</dbReference>
<dbReference type="GO" id="GO:0050567">
    <property type="term" value="F:glutaminyl-tRNA synthase (glutamine-hydrolyzing) activity"/>
    <property type="evidence" value="ECO:0007669"/>
    <property type="project" value="UniProtKB-UniRule"/>
</dbReference>
<dbReference type="GO" id="GO:0070681">
    <property type="term" value="P:glutaminyl-tRNAGln biosynthesis via transamidation"/>
    <property type="evidence" value="ECO:0007669"/>
    <property type="project" value="TreeGrafter"/>
</dbReference>
<dbReference type="GO" id="GO:0006412">
    <property type="term" value="P:translation"/>
    <property type="evidence" value="ECO:0007669"/>
    <property type="project" value="UniProtKB-UniRule"/>
</dbReference>
<dbReference type="FunFam" id="1.10.10.410:FF:000001">
    <property type="entry name" value="Aspartyl/glutamyl-tRNA(Asn/Gln) amidotransferase subunit B"/>
    <property type="match status" value="1"/>
</dbReference>
<dbReference type="FunFam" id="1.10.150.380:FF:000001">
    <property type="entry name" value="Aspartyl/glutamyl-tRNA(Asn/Gln) amidotransferase subunit B"/>
    <property type="match status" value="1"/>
</dbReference>
<dbReference type="Gene3D" id="1.10.10.410">
    <property type="match status" value="1"/>
</dbReference>
<dbReference type="Gene3D" id="1.10.150.380">
    <property type="entry name" value="GatB domain, N-terminal subdomain"/>
    <property type="match status" value="1"/>
</dbReference>
<dbReference type="HAMAP" id="MF_00121">
    <property type="entry name" value="GatB"/>
    <property type="match status" value="1"/>
</dbReference>
<dbReference type="InterPro" id="IPR017959">
    <property type="entry name" value="Asn/Gln-tRNA_amidoTrfase_suB/E"/>
</dbReference>
<dbReference type="InterPro" id="IPR006075">
    <property type="entry name" value="Asn/Gln-tRNA_Trfase_suB/E_cat"/>
</dbReference>
<dbReference type="InterPro" id="IPR018027">
    <property type="entry name" value="Asn/Gln_amidotransferase"/>
</dbReference>
<dbReference type="InterPro" id="IPR003789">
    <property type="entry name" value="Asn/Gln_tRNA_amidoTrase-B-like"/>
</dbReference>
<dbReference type="InterPro" id="IPR004413">
    <property type="entry name" value="GatB"/>
</dbReference>
<dbReference type="InterPro" id="IPR042114">
    <property type="entry name" value="GatB_C_1"/>
</dbReference>
<dbReference type="InterPro" id="IPR023168">
    <property type="entry name" value="GatB_Yqey_C_2"/>
</dbReference>
<dbReference type="InterPro" id="IPR017958">
    <property type="entry name" value="Gln-tRNA_amidoTrfase_suB_CS"/>
</dbReference>
<dbReference type="InterPro" id="IPR014746">
    <property type="entry name" value="Gln_synth/guanido_kin_cat_dom"/>
</dbReference>
<dbReference type="NCBIfam" id="TIGR00133">
    <property type="entry name" value="gatB"/>
    <property type="match status" value="1"/>
</dbReference>
<dbReference type="NCBIfam" id="NF004011">
    <property type="entry name" value="PRK05477.1-1"/>
    <property type="match status" value="1"/>
</dbReference>
<dbReference type="NCBIfam" id="NF004012">
    <property type="entry name" value="PRK05477.1-2"/>
    <property type="match status" value="1"/>
</dbReference>
<dbReference type="NCBIfam" id="NF004014">
    <property type="entry name" value="PRK05477.1-4"/>
    <property type="match status" value="1"/>
</dbReference>
<dbReference type="PANTHER" id="PTHR11659">
    <property type="entry name" value="GLUTAMYL-TRNA GLN AMIDOTRANSFERASE SUBUNIT B MITOCHONDRIAL AND PROKARYOTIC PET112-RELATED"/>
    <property type="match status" value="1"/>
</dbReference>
<dbReference type="PANTHER" id="PTHR11659:SF0">
    <property type="entry name" value="GLUTAMYL-TRNA(GLN) AMIDOTRANSFERASE SUBUNIT B, MITOCHONDRIAL"/>
    <property type="match status" value="1"/>
</dbReference>
<dbReference type="Pfam" id="PF02934">
    <property type="entry name" value="GatB_N"/>
    <property type="match status" value="1"/>
</dbReference>
<dbReference type="Pfam" id="PF02637">
    <property type="entry name" value="GatB_Yqey"/>
    <property type="match status" value="1"/>
</dbReference>
<dbReference type="SMART" id="SM00845">
    <property type="entry name" value="GatB_Yqey"/>
    <property type="match status" value="1"/>
</dbReference>
<dbReference type="SUPFAM" id="SSF89095">
    <property type="entry name" value="GatB/YqeY motif"/>
    <property type="match status" value="1"/>
</dbReference>
<dbReference type="SUPFAM" id="SSF55931">
    <property type="entry name" value="Glutamine synthetase/guanido kinase"/>
    <property type="match status" value="1"/>
</dbReference>
<dbReference type="PROSITE" id="PS01234">
    <property type="entry name" value="GATB"/>
    <property type="match status" value="1"/>
</dbReference>
<evidence type="ECO:0000255" key="1">
    <source>
        <dbReference type="HAMAP-Rule" id="MF_00121"/>
    </source>
</evidence>
<sequence>MNFETVIGLEVHVELNTNSKIFSPSSAHFGQEQNANTNVIDWSFPGVLPVMNKGVIDAGIKAALALNMDIHQNMHFDRKNYFYPDNPKAYQISQFDEPIGYNGWIEIELEDGTRKKIRIERAHLEEDAGKNTHGTDGYSYVDLNRQGVPLIEIVSEADMRSPEEAYAYLTALKEIIQYTGISDVKMEEGSMRVDANISLRPYGQEEFGTKAELKNLNSFNNVRKGLIHEEKRQAQVLRSGGQIQQETRRFDETTGETILMRVKEGSSDYRYFPEPDLPLFDISDEWIDQVRLELPEFPQERRAKYVSSFGLSSYDASQLTATKATSDFFEKAVAIGGDAKQVSNWLQGEVAQFLNSESKSIEEIGLTPENLVEMIGLIADGTISSKIAKKVFVHLAKNGGSAEEFVKKAGLVQISDPEVLIPIIHQVFADNEAAVIDFKSGKRNADKAFTGYLMKATKGQANPQVALKLLAQELAKLKEE</sequence>
<accession>Q3JZM2</accession>